<accession>A6UYL2</accession>
<dbReference type="EC" id="2.1.3.2" evidence="1"/>
<dbReference type="EMBL" id="CP000744">
    <property type="protein sequence ID" value="ABR82166.1"/>
    <property type="molecule type" value="Genomic_DNA"/>
</dbReference>
<dbReference type="RefSeq" id="WP_003157750.1">
    <property type="nucleotide sequence ID" value="NC_009656.1"/>
</dbReference>
<dbReference type="SMR" id="A6UYL2"/>
<dbReference type="GeneID" id="77218929"/>
<dbReference type="KEGG" id="pap:PSPA7_0502"/>
<dbReference type="HOGENOM" id="CLU_043846_2_0_6"/>
<dbReference type="UniPathway" id="UPA00070">
    <property type="reaction ID" value="UER00116"/>
</dbReference>
<dbReference type="Proteomes" id="UP000001582">
    <property type="component" value="Chromosome"/>
</dbReference>
<dbReference type="GO" id="GO:0005829">
    <property type="term" value="C:cytosol"/>
    <property type="evidence" value="ECO:0007669"/>
    <property type="project" value="TreeGrafter"/>
</dbReference>
<dbReference type="GO" id="GO:0016597">
    <property type="term" value="F:amino acid binding"/>
    <property type="evidence" value="ECO:0007669"/>
    <property type="project" value="InterPro"/>
</dbReference>
<dbReference type="GO" id="GO:0004070">
    <property type="term" value="F:aspartate carbamoyltransferase activity"/>
    <property type="evidence" value="ECO:0007669"/>
    <property type="project" value="UniProtKB-UniRule"/>
</dbReference>
<dbReference type="GO" id="GO:0006207">
    <property type="term" value="P:'de novo' pyrimidine nucleobase biosynthetic process"/>
    <property type="evidence" value="ECO:0007669"/>
    <property type="project" value="InterPro"/>
</dbReference>
<dbReference type="GO" id="GO:0044205">
    <property type="term" value="P:'de novo' UMP biosynthetic process"/>
    <property type="evidence" value="ECO:0007669"/>
    <property type="project" value="UniProtKB-UniRule"/>
</dbReference>
<dbReference type="GO" id="GO:0006520">
    <property type="term" value="P:amino acid metabolic process"/>
    <property type="evidence" value="ECO:0007669"/>
    <property type="project" value="InterPro"/>
</dbReference>
<dbReference type="FunFam" id="3.40.50.1370:FF:000006">
    <property type="entry name" value="Aspartate carbamoyltransferase"/>
    <property type="match status" value="1"/>
</dbReference>
<dbReference type="FunFam" id="3.40.50.1370:FF:000007">
    <property type="entry name" value="Aspartate carbamoyltransferase"/>
    <property type="match status" value="1"/>
</dbReference>
<dbReference type="Gene3D" id="3.40.50.1370">
    <property type="entry name" value="Aspartate/ornithine carbamoyltransferase"/>
    <property type="match status" value="2"/>
</dbReference>
<dbReference type="HAMAP" id="MF_00001">
    <property type="entry name" value="Asp_carb_tr"/>
    <property type="match status" value="1"/>
</dbReference>
<dbReference type="InterPro" id="IPR006132">
    <property type="entry name" value="Asp/Orn_carbamoyltranf_P-bd"/>
</dbReference>
<dbReference type="InterPro" id="IPR006130">
    <property type="entry name" value="Asp/Orn_carbamoylTrfase"/>
</dbReference>
<dbReference type="InterPro" id="IPR036901">
    <property type="entry name" value="Asp/Orn_carbamoylTrfase_sf"/>
</dbReference>
<dbReference type="InterPro" id="IPR002082">
    <property type="entry name" value="Asp_carbamoyltransf"/>
</dbReference>
<dbReference type="InterPro" id="IPR006131">
    <property type="entry name" value="Asp_carbamoyltransf_Asp/Orn-bd"/>
</dbReference>
<dbReference type="NCBIfam" id="TIGR00670">
    <property type="entry name" value="asp_carb_tr"/>
    <property type="match status" value="1"/>
</dbReference>
<dbReference type="NCBIfam" id="NF002032">
    <property type="entry name" value="PRK00856.1"/>
    <property type="match status" value="1"/>
</dbReference>
<dbReference type="PANTHER" id="PTHR45753:SF6">
    <property type="entry name" value="ASPARTATE CARBAMOYLTRANSFERASE"/>
    <property type="match status" value="1"/>
</dbReference>
<dbReference type="PANTHER" id="PTHR45753">
    <property type="entry name" value="ORNITHINE CARBAMOYLTRANSFERASE, MITOCHONDRIAL"/>
    <property type="match status" value="1"/>
</dbReference>
<dbReference type="Pfam" id="PF00185">
    <property type="entry name" value="OTCace"/>
    <property type="match status" value="1"/>
</dbReference>
<dbReference type="Pfam" id="PF02729">
    <property type="entry name" value="OTCace_N"/>
    <property type="match status" value="1"/>
</dbReference>
<dbReference type="PRINTS" id="PR00100">
    <property type="entry name" value="AOTCASE"/>
</dbReference>
<dbReference type="PRINTS" id="PR00101">
    <property type="entry name" value="ATCASE"/>
</dbReference>
<dbReference type="SUPFAM" id="SSF53671">
    <property type="entry name" value="Aspartate/ornithine carbamoyltransferase"/>
    <property type="match status" value="1"/>
</dbReference>
<dbReference type="PROSITE" id="PS00097">
    <property type="entry name" value="CARBAMOYLTRANSFERASE"/>
    <property type="match status" value="1"/>
</dbReference>
<reference key="1">
    <citation type="submission" date="2007-06" db="EMBL/GenBank/DDBJ databases">
        <authorList>
            <person name="Dodson R.J."/>
            <person name="Harkins D."/>
            <person name="Paulsen I.T."/>
        </authorList>
    </citation>
    <scope>NUCLEOTIDE SEQUENCE [LARGE SCALE GENOMIC DNA]</scope>
    <source>
        <strain>DSM 24068 / PA7</strain>
    </source>
</reference>
<name>PYRB_PSEP7</name>
<evidence type="ECO:0000255" key="1">
    <source>
        <dbReference type="HAMAP-Rule" id="MF_00001"/>
    </source>
</evidence>
<comment type="function">
    <text evidence="1">Catalyzes the condensation of carbamoyl phosphate and aspartate to form carbamoyl aspartate and inorganic phosphate, the committed step in the de novo pyrimidine nucleotide biosynthesis pathway.</text>
</comment>
<comment type="catalytic activity">
    <reaction evidence="1">
        <text>carbamoyl phosphate + L-aspartate = N-carbamoyl-L-aspartate + phosphate + H(+)</text>
        <dbReference type="Rhea" id="RHEA:20013"/>
        <dbReference type="ChEBI" id="CHEBI:15378"/>
        <dbReference type="ChEBI" id="CHEBI:29991"/>
        <dbReference type="ChEBI" id="CHEBI:32814"/>
        <dbReference type="ChEBI" id="CHEBI:43474"/>
        <dbReference type="ChEBI" id="CHEBI:58228"/>
        <dbReference type="EC" id="2.1.3.2"/>
    </reaction>
</comment>
<comment type="pathway">
    <text evidence="1">Pyrimidine metabolism; UMP biosynthesis via de novo pathway; (S)-dihydroorotate from bicarbonate: step 2/3.</text>
</comment>
<comment type="subunit">
    <text evidence="1">Heterododecamer (2C3:3R2) of six catalytic PyrB chains organized as two trimers (C3), and six regulatory PyrI chains organized as three dimers (R2).</text>
</comment>
<comment type="similarity">
    <text evidence="1">Belongs to the aspartate/ornithine carbamoyltransferase superfamily. ATCase family.</text>
</comment>
<gene>
    <name evidence="1" type="primary">pyrB</name>
    <name type="ordered locus">PSPA7_0502</name>
</gene>
<protein>
    <recommendedName>
        <fullName evidence="1">Aspartate carbamoyltransferase catalytic subunit</fullName>
        <ecNumber evidence="1">2.1.3.2</ecNumber>
    </recommendedName>
    <alternativeName>
        <fullName evidence="1">Aspartate transcarbamylase</fullName>
        <shortName evidence="1">ATCase</shortName>
    </alternativeName>
</protein>
<sequence>MPTDAKRPLQLNDQGQLRHFISLDGLPRELLTEILDTADSFLEVGARAVKKVPLLRGKTVCNVFFENSTRTRTTFELAAQRLSADVISLNVSTSSTSKGETLTDTLRNLEAMAADMFVVRHSDSGAAHFIAEHVSPNVAVINGGDGRHAHPTQGMLDMLTIRRHKGNFEQLSVAIVGDILHSRVARSNMLALKTLGCPDIRVIAPRTLLPVGLEEQYGVRVFTNADEGLKDVDVVIMLRLQRERMQGGLLPSEGEFFRLYGLTEKRLKLARPDAIVMHPGPINRGVEIESAVADGAQSVILNQVTYGIAIRMAVLSMAMSGQNTQRQLEQEDAE</sequence>
<feature type="chain" id="PRO_1000000019" description="Aspartate carbamoyltransferase catalytic subunit">
    <location>
        <begin position="1"/>
        <end position="334"/>
    </location>
</feature>
<feature type="binding site" evidence="1">
    <location>
        <position position="70"/>
    </location>
    <ligand>
        <name>carbamoyl phosphate</name>
        <dbReference type="ChEBI" id="CHEBI:58228"/>
    </ligand>
</feature>
<feature type="binding site" evidence="1">
    <location>
        <position position="71"/>
    </location>
    <ligand>
        <name>carbamoyl phosphate</name>
        <dbReference type="ChEBI" id="CHEBI:58228"/>
    </ligand>
</feature>
<feature type="binding site" evidence="1">
    <location>
        <position position="98"/>
    </location>
    <ligand>
        <name>L-aspartate</name>
        <dbReference type="ChEBI" id="CHEBI:29991"/>
    </ligand>
</feature>
<feature type="binding site" evidence="1">
    <location>
        <position position="120"/>
    </location>
    <ligand>
        <name>carbamoyl phosphate</name>
        <dbReference type="ChEBI" id="CHEBI:58228"/>
    </ligand>
</feature>
<feature type="binding site" evidence="1">
    <location>
        <position position="150"/>
    </location>
    <ligand>
        <name>carbamoyl phosphate</name>
        <dbReference type="ChEBI" id="CHEBI:58228"/>
    </ligand>
</feature>
<feature type="binding site" evidence="1">
    <location>
        <position position="153"/>
    </location>
    <ligand>
        <name>carbamoyl phosphate</name>
        <dbReference type="ChEBI" id="CHEBI:58228"/>
    </ligand>
</feature>
<feature type="binding site" evidence="1">
    <location>
        <position position="183"/>
    </location>
    <ligand>
        <name>L-aspartate</name>
        <dbReference type="ChEBI" id="CHEBI:29991"/>
    </ligand>
</feature>
<feature type="binding site" evidence="1">
    <location>
        <position position="239"/>
    </location>
    <ligand>
        <name>L-aspartate</name>
        <dbReference type="ChEBI" id="CHEBI:29991"/>
    </ligand>
</feature>
<feature type="binding site" evidence="1">
    <location>
        <position position="280"/>
    </location>
    <ligand>
        <name>carbamoyl phosphate</name>
        <dbReference type="ChEBI" id="CHEBI:58228"/>
    </ligand>
</feature>
<feature type="binding site" evidence="1">
    <location>
        <position position="281"/>
    </location>
    <ligand>
        <name>carbamoyl phosphate</name>
        <dbReference type="ChEBI" id="CHEBI:58228"/>
    </ligand>
</feature>
<proteinExistence type="inferred from homology"/>
<organism>
    <name type="scientific">Pseudomonas paraeruginosa (strain DSM 24068 / PA7)</name>
    <name type="common">Pseudomonas aeruginosa (strain PA7)</name>
    <dbReference type="NCBI Taxonomy" id="381754"/>
    <lineage>
        <taxon>Bacteria</taxon>
        <taxon>Pseudomonadati</taxon>
        <taxon>Pseudomonadota</taxon>
        <taxon>Gammaproteobacteria</taxon>
        <taxon>Pseudomonadales</taxon>
        <taxon>Pseudomonadaceae</taxon>
        <taxon>Pseudomonas</taxon>
        <taxon>Pseudomonas paraeruginosa</taxon>
    </lineage>
</organism>
<keyword id="KW-0665">Pyrimidine biosynthesis</keyword>
<keyword id="KW-0808">Transferase</keyword>